<protein>
    <recommendedName>
        <fullName>Bradykinin-potentiating peptide 11a</fullName>
        <shortName>BPP-11a</shortName>
    </recommendedName>
</protein>
<reference key="1">
    <citation type="journal article" date="2005" name="Rapid Commun. Mass Spectrom.">
        <title>Fast analysis of low molecular mass compounds present in snake venom: identification of ten new pyroglutamate-containing peptides.</title>
        <authorList>
            <person name="Wermelinger L.S."/>
            <person name="Dutra D.L."/>
            <person name="Oliveira-Carvalho A.L."/>
            <person name="Soares M.R."/>
            <person name="Bloch C. Jr."/>
            <person name="Zingali R.B."/>
        </authorList>
    </citation>
    <scope>PROTEIN SEQUENCE</scope>
    <scope>SUBCELLULAR LOCATION</scope>
    <scope>TISSUE SPECIFICITY</scope>
    <scope>MASS SPECTROMETRY</scope>
    <scope>PYROGLUTAMATE FORMATION AT GLN-1</scope>
    <source>
        <tissue>Venom</tissue>
    </source>
</reference>
<evidence type="ECO:0000250" key="1"/>
<evidence type="ECO:0000269" key="2">
    <source>
    </source>
</evidence>
<evidence type="ECO:0000305" key="3"/>
<proteinExistence type="evidence at protein level"/>
<dbReference type="GO" id="GO:0005576">
    <property type="term" value="C:extracellular region"/>
    <property type="evidence" value="ECO:0007669"/>
    <property type="project" value="UniProtKB-SubCell"/>
</dbReference>
<dbReference type="GO" id="GO:0030414">
    <property type="term" value="F:peptidase inhibitor activity"/>
    <property type="evidence" value="ECO:0007669"/>
    <property type="project" value="UniProtKB-KW"/>
</dbReference>
<dbReference type="GO" id="GO:0090729">
    <property type="term" value="F:toxin activity"/>
    <property type="evidence" value="ECO:0007669"/>
    <property type="project" value="UniProtKB-KW"/>
</dbReference>
<dbReference type="GO" id="GO:0008217">
    <property type="term" value="P:regulation of blood pressure"/>
    <property type="evidence" value="ECO:0007669"/>
    <property type="project" value="UniProtKB-KW"/>
</dbReference>
<name>BP11A_CROVV</name>
<keyword id="KW-0903">Direct protein sequencing</keyword>
<keyword id="KW-0382">Hypotensive agent</keyword>
<keyword id="KW-0481">Metalloenzyme inhibitor</keyword>
<keyword id="KW-0483">Metalloprotease inhibitor</keyword>
<keyword id="KW-0646">Protease inhibitor</keyword>
<keyword id="KW-0873">Pyrrolidone carboxylic acid</keyword>
<keyword id="KW-0964">Secreted</keyword>
<keyword id="KW-0800">Toxin</keyword>
<sequence>QGPSPRHPIPP</sequence>
<organism>
    <name type="scientific">Crotalus viridis viridis</name>
    <name type="common">Prairie rattlesnake</name>
    <dbReference type="NCBI Taxonomy" id="8742"/>
    <lineage>
        <taxon>Eukaryota</taxon>
        <taxon>Metazoa</taxon>
        <taxon>Chordata</taxon>
        <taxon>Craniata</taxon>
        <taxon>Vertebrata</taxon>
        <taxon>Euteleostomi</taxon>
        <taxon>Lepidosauria</taxon>
        <taxon>Squamata</taxon>
        <taxon>Bifurcata</taxon>
        <taxon>Unidentata</taxon>
        <taxon>Episquamata</taxon>
        <taxon>Toxicofera</taxon>
        <taxon>Serpentes</taxon>
        <taxon>Colubroidea</taxon>
        <taxon>Viperidae</taxon>
        <taxon>Crotalinae</taxon>
        <taxon>Crotalus</taxon>
    </lineage>
</organism>
<accession>P0C7K1</accession>
<comment type="function">
    <text evidence="1">This peptide both inhibits the activity of the angiotensin-converting enzyme (ACE) and enhances the action of bradykinin by inhibiting the peptidases that inactivate it. It acts as an indirect hypotensive agent (By similarity).</text>
</comment>
<comment type="subcellular location">
    <subcellularLocation>
        <location evidence="2">Secreted</location>
    </subcellularLocation>
</comment>
<comment type="tissue specificity">
    <text evidence="2">Expressed by the venom gland.</text>
</comment>
<comment type="mass spectrometry"/>
<comment type="similarity">
    <text evidence="3">Belongs to the bradykinin-potentiating peptide family.</text>
</comment>
<feature type="peptide" id="PRO_0000335877" description="Bradykinin-potentiating peptide 11a">
    <location>
        <begin position="1"/>
        <end position="11"/>
    </location>
</feature>
<feature type="modified residue" description="Pyrrolidone carboxylic acid" evidence="2">
    <location>
        <position position="1"/>
    </location>
</feature>